<evidence type="ECO:0000255" key="1">
    <source>
        <dbReference type="HAMAP-Rule" id="MF_01245"/>
    </source>
</evidence>
<evidence type="ECO:0000305" key="2"/>
<keyword id="KW-1185">Reference proteome</keyword>
<organism>
    <name type="scientific">Saccharolobus solfataricus (strain ATCC 35092 / DSM 1617 / JCM 11322 / P2)</name>
    <name type="common">Sulfolobus solfataricus</name>
    <dbReference type="NCBI Taxonomy" id="273057"/>
    <lineage>
        <taxon>Archaea</taxon>
        <taxon>Thermoproteota</taxon>
        <taxon>Thermoprotei</taxon>
        <taxon>Sulfolobales</taxon>
        <taxon>Sulfolobaceae</taxon>
        <taxon>Saccharolobus</taxon>
    </lineage>
</organism>
<accession>Q97VE1</accession>
<name>Y2687_SACS2</name>
<sequence>MKIKDAINRVRWKYKEKIDDYVIVIKDKLTETGLKEIPFTDIYTVDNNYLYLKGEDTIIPLHRVLMIRRKSDDALIWKRGD</sequence>
<feature type="chain" id="PRO_0000053422" description="UPF0248 protein SSO2687">
    <location>
        <begin position="1"/>
        <end position="81"/>
    </location>
</feature>
<protein>
    <recommendedName>
        <fullName evidence="1">UPF0248 protein SSO2687</fullName>
    </recommendedName>
</protein>
<proteinExistence type="inferred from homology"/>
<dbReference type="EMBL" id="AE006641">
    <property type="protein sequence ID" value="AAK42803.1"/>
    <property type="status" value="ALT_INIT"/>
    <property type="molecule type" value="Genomic_DNA"/>
</dbReference>
<dbReference type="PIR" id="D90443">
    <property type="entry name" value="D90443"/>
</dbReference>
<dbReference type="RefSeq" id="WP_009988607.1">
    <property type="nucleotide sequence ID" value="NC_002754.1"/>
</dbReference>
<dbReference type="STRING" id="273057.SSO2687"/>
<dbReference type="PaxDb" id="273057-SSO2687"/>
<dbReference type="EnsemblBacteria" id="AAK42803">
    <property type="protein sequence ID" value="AAK42803"/>
    <property type="gene ID" value="SSO2687"/>
</dbReference>
<dbReference type="KEGG" id="sso:SSO2687"/>
<dbReference type="PATRIC" id="fig|273057.12.peg.2767"/>
<dbReference type="eggNOG" id="arCOG01302">
    <property type="taxonomic scope" value="Archaea"/>
</dbReference>
<dbReference type="HOGENOM" id="CLU_172276_0_0_2"/>
<dbReference type="InParanoid" id="Q97VE1"/>
<dbReference type="Proteomes" id="UP000001974">
    <property type="component" value="Chromosome"/>
</dbReference>
<dbReference type="HAMAP" id="MF_01245">
    <property type="entry name" value="UPF0248"/>
    <property type="match status" value="1"/>
</dbReference>
<dbReference type="InterPro" id="IPR040459">
    <property type="entry name" value="MJ1316"/>
</dbReference>
<dbReference type="InterPro" id="IPR007547">
    <property type="entry name" value="UPF0248"/>
</dbReference>
<dbReference type="Pfam" id="PF04457">
    <property type="entry name" value="MJ1316"/>
    <property type="match status" value="1"/>
</dbReference>
<comment type="similarity">
    <text evidence="1">Belongs to the UPF0248 family.</text>
</comment>
<comment type="sequence caution" evidence="2">
    <conflict type="erroneous initiation">
        <sequence resource="EMBL-CDS" id="AAK42803"/>
    </conflict>
</comment>
<gene>
    <name type="ordered locus">SSO2687</name>
</gene>
<reference key="1">
    <citation type="journal article" date="2001" name="Proc. Natl. Acad. Sci. U.S.A.">
        <title>The complete genome of the crenarchaeon Sulfolobus solfataricus P2.</title>
        <authorList>
            <person name="She Q."/>
            <person name="Singh R.K."/>
            <person name="Confalonieri F."/>
            <person name="Zivanovic Y."/>
            <person name="Allard G."/>
            <person name="Awayez M.J."/>
            <person name="Chan-Weiher C.C.-Y."/>
            <person name="Clausen I.G."/>
            <person name="Curtis B.A."/>
            <person name="De Moors A."/>
            <person name="Erauso G."/>
            <person name="Fletcher C."/>
            <person name="Gordon P.M.K."/>
            <person name="Heikamp-de Jong I."/>
            <person name="Jeffries A.C."/>
            <person name="Kozera C.J."/>
            <person name="Medina N."/>
            <person name="Peng X."/>
            <person name="Thi-Ngoc H.P."/>
            <person name="Redder P."/>
            <person name="Schenk M.E."/>
            <person name="Theriault C."/>
            <person name="Tolstrup N."/>
            <person name="Charlebois R.L."/>
            <person name="Doolittle W.F."/>
            <person name="Duguet M."/>
            <person name="Gaasterland T."/>
            <person name="Garrett R.A."/>
            <person name="Ragan M.A."/>
            <person name="Sensen C.W."/>
            <person name="Van der Oost J."/>
        </authorList>
    </citation>
    <scope>NUCLEOTIDE SEQUENCE [LARGE SCALE GENOMIC DNA]</scope>
    <source>
        <strain>ATCC 35092 / DSM 1617 / JCM 11322 / P2</strain>
    </source>
</reference>